<gene>
    <name evidence="1" type="primary">sthA</name>
    <name evidence="1" type="synonym">udhA</name>
    <name type="ordered locus">BWG_3630</name>
</gene>
<name>STHA_ECOBW</name>
<keyword id="KW-0963">Cytoplasm</keyword>
<keyword id="KW-0274">FAD</keyword>
<keyword id="KW-0285">Flavoprotein</keyword>
<keyword id="KW-0520">NAD</keyword>
<keyword id="KW-0521">NADP</keyword>
<keyword id="KW-0560">Oxidoreductase</keyword>
<accession>C5A0R1</accession>
<protein>
    <recommendedName>
        <fullName evidence="1">Soluble pyridine nucleotide transhydrogenase</fullName>
        <shortName evidence="1">STH</shortName>
        <ecNumber evidence="1">1.6.1.1</ecNumber>
    </recommendedName>
    <alternativeName>
        <fullName evidence="1">NAD(P)(+) transhydrogenase [B-specific]</fullName>
    </alternativeName>
</protein>
<sequence>MPHSYDYDAIVIGSGPGGEGAAMGLVKQGARVAVIERYQNVGGGCTHWGTIPSKALRHAVSRIIEFNQNPLYSDHSRLLRSSFADILNHADNVINQQTRMRQGFYERNHCEILQGNARFVDEHTLALDCPDGSVETLTAEKFVIACGSRPYHPTDVDFTHPRIYDSDSILSMHHEPRHVLIYGAGVIGCEYASIFRGMDVKVDLINTRDRLLAFLDQEMSDSLSYHFWNSGVVIRHNEEYEKIEGCDDGVIMHLKSGKKLKADCLLYANGRTGNTDSLALQNIGLETDSRGQLKVNSMYQTAQPHVYAVGDVIGYPSLASAAYDQGRIAAQALVKGEATAHLIEDIPTGIYTIPEISSVGKTEQQLTAMKVPYEVGRAQFKHLARAQIVGMNVGTLKILFHRETKEILGIHCFGERAAEIIHIGQAIMEQKGGGNTIEYFVNTTFNYPTMAEAYRVAALNGLNRLF</sequence>
<comment type="function">
    <text evidence="1">Conversion of NADPH, generated by peripheral catabolic pathways, to NADH, which can enter the respiratory chain for energy generation.</text>
</comment>
<comment type="catalytic activity">
    <reaction evidence="1">
        <text>NAD(+) + NADPH = NADH + NADP(+)</text>
        <dbReference type="Rhea" id="RHEA:11692"/>
        <dbReference type="ChEBI" id="CHEBI:57540"/>
        <dbReference type="ChEBI" id="CHEBI:57783"/>
        <dbReference type="ChEBI" id="CHEBI:57945"/>
        <dbReference type="ChEBI" id="CHEBI:58349"/>
        <dbReference type="EC" id="1.6.1.1"/>
    </reaction>
</comment>
<comment type="cofactor">
    <cofactor evidence="1">
        <name>FAD</name>
        <dbReference type="ChEBI" id="CHEBI:57692"/>
    </cofactor>
    <text evidence="1">Binds 1 FAD per subunit.</text>
</comment>
<comment type="subcellular location">
    <subcellularLocation>
        <location evidence="1">Cytoplasm</location>
    </subcellularLocation>
</comment>
<comment type="similarity">
    <text evidence="1">Belongs to the class-I pyridine nucleotide-disulfide oxidoreductase family.</text>
</comment>
<proteinExistence type="inferred from homology"/>
<reference key="1">
    <citation type="journal article" date="2009" name="J. Bacteriol.">
        <title>Genomic sequencing reveals regulatory mutations and recombinational events in the widely used MC4100 lineage of Escherichia coli K-12.</title>
        <authorList>
            <person name="Ferenci T."/>
            <person name="Zhou Z."/>
            <person name="Betteridge T."/>
            <person name="Ren Y."/>
            <person name="Liu Y."/>
            <person name="Feng L."/>
            <person name="Reeves P.R."/>
            <person name="Wang L."/>
        </authorList>
    </citation>
    <scope>NUCLEOTIDE SEQUENCE [LARGE SCALE GENOMIC DNA]</scope>
    <source>
        <strain>K12 / MC4100 / BW2952</strain>
    </source>
</reference>
<evidence type="ECO:0000255" key="1">
    <source>
        <dbReference type="HAMAP-Rule" id="MF_00247"/>
    </source>
</evidence>
<organism>
    <name type="scientific">Escherichia coli (strain K12 / MC4100 / BW2952)</name>
    <dbReference type="NCBI Taxonomy" id="595496"/>
    <lineage>
        <taxon>Bacteria</taxon>
        <taxon>Pseudomonadati</taxon>
        <taxon>Pseudomonadota</taxon>
        <taxon>Gammaproteobacteria</taxon>
        <taxon>Enterobacterales</taxon>
        <taxon>Enterobacteriaceae</taxon>
        <taxon>Escherichia</taxon>
    </lineage>
</organism>
<feature type="chain" id="PRO_1000204498" description="Soluble pyridine nucleotide transhydrogenase">
    <location>
        <begin position="1"/>
        <end position="466"/>
    </location>
</feature>
<feature type="binding site" evidence="1">
    <location>
        <begin position="36"/>
        <end position="45"/>
    </location>
    <ligand>
        <name>FAD</name>
        <dbReference type="ChEBI" id="CHEBI:57692"/>
    </ligand>
</feature>
<dbReference type="EC" id="1.6.1.1" evidence="1"/>
<dbReference type="EMBL" id="CP001396">
    <property type="protein sequence ID" value="ACR65346.1"/>
    <property type="molecule type" value="Genomic_DNA"/>
</dbReference>
<dbReference type="RefSeq" id="WP_001120810.1">
    <property type="nucleotide sequence ID" value="NC_012759.1"/>
</dbReference>
<dbReference type="SMR" id="C5A0R1"/>
<dbReference type="GeneID" id="75203206"/>
<dbReference type="KEGG" id="ebw:BWG_3630"/>
<dbReference type="HOGENOM" id="CLU_016755_0_0_6"/>
<dbReference type="GO" id="GO:0005829">
    <property type="term" value="C:cytosol"/>
    <property type="evidence" value="ECO:0007669"/>
    <property type="project" value="TreeGrafter"/>
</dbReference>
<dbReference type="GO" id="GO:0004148">
    <property type="term" value="F:dihydrolipoyl dehydrogenase (NADH) activity"/>
    <property type="evidence" value="ECO:0007669"/>
    <property type="project" value="TreeGrafter"/>
</dbReference>
<dbReference type="GO" id="GO:0050660">
    <property type="term" value="F:flavin adenine dinucleotide binding"/>
    <property type="evidence" value="ECO:0007669"/>
    <property type="project" value="TreeGrafter"/>
</dbReference>
<dbReference type="GO" id="GO:0003957">
    <property type="term" value="F:NAD(P)+ transhydrogenase (Si-specific) activity"/>
    <property type="evidence" value="ECO:0007669"/>
    <property type="project" value="UniProtKB-UniRule"/>
</dbReference>
<dbReference type="GO" id="GO:0006103">
    <property type="term" value="P:2-oxoglutarate metabolic process"/>
    <property type="evidence" value="ECO:0007669"/>
    <property type="project" value="TreeGrafter"/>
</dbReference>
<dbReference type="GO" id="GO:0006739">
    <property type="term" value="P:NADP metabolic process"/>
    <property type="evidence" value="ECO:0007669"/>
    <property type="project" value="UniProtKB-UniRule"/>
</dbReference>
<dbReference type="FunFam" id="3.30.390.30:FF:000002">
    <property type="entry name" value="Soluble pyridine nucleotide transhydrogenase"/>
    <property type="match status" value="1"/>
</dbReference>
<dbReference type="FunFam" id="3.50.50.60:FF:000008">
    <property type="entry name" value="Soluble pyridine nucleotide transhydrogenase"/>
    <property type="match status" value="1"/>
</dbReference>
<dbReference type="Gene3D" id="3.30.390.30">
    <property type="match status" value="1"/>
</dbReference>
<dbReference type="Gene3D" id="3.50.50.60">
    <property type="entry name" value="FAD/NAD(P)-binding domain"/>
    <property type="match status" value="2"/>
</dbReference>
<dbReference type="HAMAP" id="MF_00247">
    <property type="entry name" value="SthA"/>
    <property type="match status" value="1"/>
</dbReference>
<dbReference type="InterPro" id="IPR050151">
    <property type="entry name" value="Class-I_Pyr_Nuc-Dis_Oxidored"/>
</dbReference>
<dbReference type="InterPro" id="IPR036188">
    <property type="entry name" value="FAD/NAD-bd_sf"/>
</dbReference>
<dbReference type="InterPro" id="IPR023753">
    <property type="entry name" value="FAD/NAD-binding_dom"/>
</dbReference>
<dbReference type="InterPro" id="IPR016156">
    <property type="entry name" value="FAD/NAD-linked_Rdtase_dimer_sf"/>
</dbReference>
<dbReference type="InterPro" id="IPR001100">
    <property type="entry name" value="Pyr_nuc-diS_OxRdtase"/>
</dbReference>
<dbReference type="InterPro" id="IPR004099">
    <property type="entry name" value="Pyr_nucl-diS_OxRdtase_dimer"/>
</dbReference>
<dbReference type="InterPro" id="IPR022962">
    <property type="entry name" value="STH_gammaproteobact"/>
</dbReference>
<dbReference type="NCBIfam" id="NF003585">
    <property type="entry name" value="PRK05249.1"/>
    <property type="match status" value="1"/>
</dbReference>
<dbReference type="PANTHER" id="PTHR22912">
    <property type="entry name" value="DISULFIDE OXIDOREDUCTASE"/>
    <property type="match status" value="1"/>
</dbReference>
<dbReference type="PANTHER" id="PTHR22912:SF93">
    <property type="entry name" value="SOLUBLE PYRIDINE NUCLEOTIDE TRANSHYDROGENASE"/>
    <property type="match status" value="1"/>
</dbReference>
<dbReference type="Pfam" id="PF07992">
    <property type="entry name" value="Pyr_redox_2"/>
    <property type="match status" value="1"/>
</dbReference>
<dbReference type="Pfam" id="PF02852">
    <property type="entry name" value="Pyr_redox_dim"/>
    <property type="match status" value="1"/>
</dbReference>
<dbReference type="PIRSF" id="PIRSF000350">
    <property type="entry name" value="Mercury_reductase_MerA"/>
    <property type="match status" value="1"/>
</dbReference>
<dbReference type="PRINTS" id="PR00368">
    <property type="entry name" value="FADPNR"/>
</dbReference>
<dbReference type="PRINTS" id="PR00411">
    <property type="entry name" value="PNDRDTASEI"/>
</dbReference>
<dbReference type="SUPFAM" id="SSF51905">
    <property type="entry name" value="FAD/NAD(P)-binding domain"/>
    <property type="match status" value="1"/>
</dbReference>
<dbReference type="SUPFAM" id="SSF55424">
    <property type="entry name" value="FAD/NAD-linked reductases, dimerisation (C-terminal) domain"/>
    <property type="match status" value="1"/>
</dbReference>